<feature type="initiator methionine" description="Removed" evidence="5">
    <location>
        <position position="1"/>
    </location>
</feature>
<feature type="chain" id="PRO_0000131187" description="Large ribosomal subunit protein eL19">
    <location>
        <begin position="2"/>
        <end position="149"/>
    </location>
</feature>
<feature type="region of interest" description="Disordered" evidence="2">
    <location>
        <begin position="45"/>
        <end position="130"/>
    </location>
</feature>
<feature type="compositionally biased region" description="Basic residues" evidence="2">
    <location>
        <begin position="58"/>
        <end position="85"/>
    </location>
</feature>
<feature type="compositionally biased region" description="Basic and acidic residues" evidence="2">
    <location>
        <begin position="90"/>
        <end position="113"/>
    </location>
</feature>
<feature type="sequence conflict" description="In Ref. 3; AA sequence." evidence="6" ref="3">
    <original>K</original>
    <variation>G</variation>
    <location>
        <position position="82"/>
    </location>
</feature>
<feature type="helix" evidence="8">
    <location>
        <begin position="5"/>
        <end position="14"/>
    </location>
</feature>
<feature type="helix" evidence="8">
    <location>
        <begin position="19"/>
        <end position="21"/>
    </location>
</feature>
<feature type="strand" evidence="8">
    <location>
        <begin position="22"/>
        <end position="24"/>
    </location>
</feature>
<feature type="helix" evidence="8">
    <location>
        <begin position="26"/>
        <end position="28"/>
    </location>
</feature>
<feature type="helix" evidence="8">
    <location>
        <begin position="29"/>
        <end position="34"/>
    </location>
</feature>
<feature type="helix" evidence="8">
    <location>
        <begin position="38"/>
        <end position="46"/>
    </location>
</feature>
<feature type="strand" evidence="8">
    <location>
        <begin position="49"/>
        <end position="52"/>
    </location>
</feature>
<feature type="helix" evidence="8">
    <location>
        <begin position="61"/>
        <end position="71"/>
    </location>
</feature>
<feature type="helix" evidence="8">
    <location>
        <begin position="78"/>
        <end position="80"/>
    </location>
</feature>
<feature type="helix" evidence="8">
    <location>
        <begin position="85"/>
        <end position="88"/>
    </location>
</feature>
<feature type="helix" evidence="8">
    <location>
        <begin position="91"/>
        <end position="111"/>
    </location>
</feature>
<feature type="strand" evidence="7">
    <location>
        <begin position="112"/>
        <end position="115"/>
    </location>
</feature>
<feature type="helix" evidence="8">
    <location>
        <begin position="117"/>
        <end position="127"/>
    </location>
</feature>
<feature type="turn" evidence="8">
    <location>
        <begin position="128"/>
        <end position="130"/>
    </location>
</feature>
<feature type="helix" evidence="8">
    <location>
        <begin position="135"/>
        <end position="142"/>
    </location>
</feature>
<dbReference type="EMBL" id="X58395">
    <property type="protein sequence ID" value="CAA41289.1"/>
    <property type="molecule type" value="Genomic_DNA"/>
</dbReference>
<dbReference type="EMBL" id="AY596297">
    <property type="protein sequence ID" value="AAV46512.1"/>
    <property type="molecule type" value="Genomic_DNA"/>
</dbReference>
<dbReference type="PIR" id="S16540">
    <property type="entry name" value="R5HSH4"/>
</dbReference>
<dbReference type="RefSeq" id="WP_004516953.1">
    <property type="nucleotide sequence ID" value="NZ_CP039138.1"/>
</dbReference>
<dbReference type="PDB" id="1FFK">
    <property type="method" value="X-ray"/>
    <property type="resolution" value="2.40 A"/>
    <property type="chains" value="M=2-149"/>
</dbReference>
<dbReference type="PDB" id="1JJ2">
    <property type="method" value="X-ray"/>
    <property type="resolution" value="2.40 A"/>
    <property type="chains" value="O=2-149"/>
</dbReference>
<dbReference type="PDB" id="1K73">
    <property type="method" value="X-ray"/>
    <property type="resolution" value="3.01 A"/>
    <property type="chains" value="Q=2-149"/>
</dbReference>
<dbReference type="PDB" id="1K8A">
    <property type="method" value="X-ray"/>
    <property type="resolution" value="3.00 A"/>
    <property type="chains" value="Q=2-149"/>
</dbReference>
<dbReference type="PDB" id="1K9M">
    <property type="method" value="X-ray"/>
    <property type="resolution" value="3.00 A"/>
    <property type="chains" value="Q=2-149"/>
</dbReference>
<dbReference type="PDB" id="1KC8">
    <property type="method" value="X-ray"/>
    <property type="resolution" value="3.01 A"/>
    <property type="chains" value="Q=2-149"/>
</dbReference>
<dbReference type="PDB" id="1KD1">
    <property type="method" value="X-ray"/>
    <property type="resolution" value="3.00 A"/>
    <property type="chains" value="Q=2-149"/>
</dbReference>
<dbReference type="PDB" id="1KQS">
    <property type="method" value="X-ray"/>
    <property type="resolution" value="3.10 A"/>
    <property type="chains" value="O=2-149"/>
</dbReference>
<dbReference type="PDB" id="1M1K">
    <property type="method" value="X-ray"/>
    <property type="resolution" value="3.20 A"/>
    <property type="chains" value="Q=2-149"/>
</dbReference>
<dbReference type="PDB" id="1M90">
    <property type="method" value="X-ray"/>
    <property type="resolution" value="2.80 A"/>
    <property type="chains" value="Q=2-149"/>
</dbReference>
<dbReference type="PDB" id="1N8R">
    <property type="method" value="X-ray"/>
    <property type="resolution" value="3.00 A"/>
    <property type="chains" value="Q=2-149"/>
</dbReference>
<dbReference type="PDB" id="1NJI">
    <property type="method" value="X-ray"/>
    <property type="resolution" value="3.00 A"/>
    <property type="chains" value="Q=2-149"/>
</dbReference>
<dbReference type="PDB" id="1Q7Y">
    <property type="method" value="X-ray"/>
    <property type="resolution" value="3.20 A"/>
    <property type="chains" value="Q=2-149"/>
</dbReference>
<dbReference type="PDB" id="1Q81">
    <property type="method" value="X-ray"/>
    <property type="resolution" value="2.95 A"/>
    <property type="chains" value="Q=2-149"/>
</dbReference>
<dbReference type="PDB" id="1Q82">
    <property type="method" value="X-ray"/>
    <property type="resolution" value="2.98 A"/>
    <property type="chains" value="Q=2-149"/>
</dbReference>
<dbReference type="PDB" id="1Q86">
    <property type="method" value="X-ray"/>
    <property type="resolution" value="3.00 A"/>
    <property type="chains" value="Q=2-149"/>
</dbReference>
<dbReference type="PDB" id="1QVF">
    <property type="method" value="X-ray"/>
    <property type="resolution" value="3.10 A"/>
    <property type="chains" value="O=2-149"/>
</dbReference>
<dbReference type="PDB" id="1QVG">
    <property type="method" value="X-ray"/>
    <property type="resolution" value="2.90 A"/>
    <property type="chains" value="O=2-149"/>
</dbReference>
<dbReference type="PDB" id="1S72">
    <property type="method" value="X-ray"/>
    <property type="resolution" value="2.40 A"/>
    <property type="chains" value="P=1-149"/>
</dbReference>
<dbReference type="PDB" id="1VQ4">
    <property type="method" value="X-ray"/>
    <property type="resolution" value="2.70 A"/>
    <property type="chains" value="P=1-149"/>
</dbReference>
<dbReference type="PDB" id="1VQ5">
    <property type="method" value="X-ray"/>
    <property type="resolution" value="2.60 A"/>
    <property type="chains" value="P=1-149"/>
</dbReference>
<dbReference type="PDB" id="1VQ6">
    <property type="method" value="X-ray"/>
    <property type="resolution" value="2.70 A"/>
    <property type="chains" value="P=1-149"/>
</dbReference>
<dbReference type="PDB" id="1VQ7">
    <property type="method" value="X-ray"/>
    <property type="resolution" value="2.50 A"/>
    <property type="chains" value="P=1-149"/>
</dbReference>
<dbReference type="PDB" id="1VQ8">
    <property type="method" value="X-ray"/>
    <property type="resolution" value="2.20 A"/>
    <property type="chains" value="P=1-149"/>
</dbReference>
<dbReference type="PDB" id="1VQ9">
    <property type="method" value="X-ray"/>
    <property type="resolution" value="2.40 A"/>
    <property type="chains" value="P=1-149"/>
</dbReference>
<dbReference type="PDB" id="1VQK">
    <property type="method" value="X-ray"/>
    <property type="resolution" value="2.30 A"/>
    <property type="chains" value="P=1-149"/>
</dbReference>
<dbReference type="PDB" id="1VQL">
    <property type="method" value="X-ray"/>
    <property type="resolution" value="2.30 A"/>
    <property type="chains" value="P=1-149"/>
</dbReference>
<dbReference type="PDB" id="1VQM">
    <property type="method" value="X-ray"/>
    <property type="resolution" value="2.30 A"/>
    <property type="chains" value="P=1-149"/>
</dbReference>
<dbReference type="PDB" id="1VQN">
    <property type="method" value="X-ray"/>
    <property type="resolution" value="2.40 A"/>
    <property type="chains" value="P=1-149"/>
</dbReference>
<dbReference type="PDB" id="1VQO">
    <property type="method" value="X-ray"/>
    <property type="resolution" value="2.20 A"/>
    <property type="chains" value="P=1-149"/>
</dbReference>
<dbReference type="PDB" id="1VQP">
    <property type="method" value="X-ray"/>
    <property type="resolution" value="2.25 A"/>
    <property type="chains" value="P=1-149"/>
</dbReference>
<dbReference type="PDB" id="1W2B">
    <property type="method" value="X-ray"/>
    <property type="resolution" value="3.50 A"/>
    <property type="chains" value="O=2-149"/>
</dbReference>
<dbReference type="PDB" id="1YHQ">
    <property type="method" value="X-ray"/>
    <property type="resolution" value="2.40 A"/>
    <property type="chains" value="P=1-149"/>
</dbReference>
<dbReference type="PDB" id="1YI2">
    <property type="method" value="X-ray"/>
    <property type="resolution" value="2.65 A"/>
    <property type="chains" value="P=1-149"/>
</dbReference>
<dbReference type="PDB" id="1YIJ">
    <property type="method" value="X-ray"/>
    <property type="resolution" value="2.60 A"/>
    <property type="chains" value="P=1-149"/>
</dbReference>
<dbReference type="PDB" id="1YIT">
    <property type="method" value="X-ray"/>
    <property type="resolution" value="2.80 A"/>
    <property type="chains" value="P=1-149"/>
</dbReference>
<dbReference type="PDB" id="1YJ9">
    <property type="method" value="X-ray"/>
    <property type="resolution" value="2.90 A"/>
    <property type="chains" value="P=1-149"/>
</dbReference>
<dbReference type="PDB" id="1YJN">
    <property type="method" value="X-ray"/>
    <property type="resolution" value="3.00 A"/>
    <property type="chains" value="P=1-149"/>
</dbReference>
<dbReference type="PDB" id="1YJW">
    <property type="method" value="X-ray"/>
    <property type="resolution" value="2.90 A"/>
    <property type="chains" value="P=1-149"/>
</dbReference>
<dbReference type="PDB" id="2OTJ">
    <property type="method" value="X-ray"/>
    <property type="resolution" value="2.90 A"/>
    <property type="chains" value="P=1-149"/>
</dbReference>
<dbReference type="PDB" id="2OTL">
    <property type="method" value="X-ray"/>
    <property type="resolution" value="2.70 A"/>
    <property type="chains" value="P=1-149"/>
</dbReference>
<dbReference type="PDB" id="2QA4">
    <property type="method" value="X-ray"/>
    <property type="resolution" value="3.00 A"/>
    <property type="chains" value="P=1-149"/>
</dbReference>
<dbReference type="PDB" id="2QEX">
    <property type="method" value="X-ray"/>
    <property type="resolution" value="2.90 A"/>
    <property type="chains" value="P=1-149"/>
</dbReference>
<dbReference type="PDB" id="3CC2">
    <property type="method" value="X-ray"/>
    <property type="resolution" value="2.40 A"/>
    <property type="chains" value="P=1-149"/>
</dbReference>
<dbReference type="PDB" id="3CC4">
    <property type="method" value="X-ray"/>
    <property type="resolution" value="2.70 A"/>
    <property type="chains" value="P=1-149"/>
</dbReference>
<dbReference type="PDB" id="3CC7">
    <property type="method" value="X-ray"/>
    <property type="resolution" value="2.70 A"/>
    <property type="chains" value="P=1-149"/>
</dbReference>
<dbReference type="PDB" id="3CCE">
    <property type="method" value="X-ray"/>
    <property type="resolution" value="2.75 A"/>
    <property type="chains" value="P=1-149"/>
</dbReference>
<dbReference type="PDB" id="3CCJ">
    <property type="method" value="X-ray"/>
    <property type="resolution" value="2.70 A"/>
    <property type="chains" value="P=1-149"/>
</dbReference>
<dbReference type="PDB" id="3CCL">
    <property type="method" value="X-ray"/>
    <property type="resolution" value="2.90 A"/>
    <property type="chains" value="P=1-149"/>
</dbReference>
<dbReference type="PDB" id="3CCM">
    <property type="method" value="X-ray"/>
    <property type="resolution" value="2.55 A"/>
    <property type="chains" value="P=1-149"/>
</dbReference>
<dbReference type="PDB" id="3CCQ">
    <property type="method" value="X-ray"/>
    <property type="resolution" value="2.90 A"/>
    <property type="chains" value="P=1-149"/>
</dbReference>
<dbReference type="PDB" id="3CCR">
    <property type="method" value="X-ray"/>
    <property type="resolution" value="3.00 A"/>
    <property type="chains" value="P=1-149"/>
</dbReference>
<dbReference type="PDB" id="3CCS">
    <property type="method" value="X-ray"/>
    <property type="resolution" value="2.95 A"/>
    <property type="chains" value="P=1-149"/>
</dbReference>
<dbReference type="PDB" id="3CCU">
    <property type="method" value="X-ray"/>
    <property type="resolution" value="2.80 A"/>
    <property type="chains" value="P=1-149"/>
</dbReference>
<dbReference type="PDB" id="3CCV">
    <property type="method" value="X-ray"/>
    <property type="resolution" value="2.90 A"/>
    <property type="chains" value="P=1-149"/>
</dbReference>
<dbReference type="PDB" id="3CD6">
    <property type="method" value="X-ray"/>
    <property type="resolution" value="2.75 A"/>
    <property type="chains" value="P=1-149"/>
</dbReference>
<dbReference type="PDB" id="3CMA">
    <property type="method" value="X-ray"/>
    <property type="resolution" value="2.80 A"/>
    <property type="chains" value="P=1-149"/>
</dbReference>
<dbReference type="PDB" id="3CME">
    <property type="method" value="X-ray"/>
    <property type="resolution" value="2.95 A"/>
    <property type="chains" value="P=1-149"/>
</dbReference>
<dbReference type="PDB" id="3CPW">
    <property type="method" value="X-ray"/>
    <property type="resolution" value="2.70 A"/>
    <property type="chains" value="O=1-149"/>
</dbReference>
<dbReference type="PDB" id="3CXC">
    <property type="method" value="X-ray"/>
    <property type="resolution" value="3.00 A"/>
    <property type="chains" value="O=2-149"/>
</dbReference>
<dbReference type="PDB" id="3G4S">
    <property type="method" value="X-ray"/>
    <property type="resolution" value="3.20 A"/>
    <property type="chains" value="P=2-144"/>
</dbReference>
<dbReference type="PDB" id="3G6E">
    <property type="method" value="X-ray"/>
    <property type="resolution" value="2.70 A"/>
    <property type="chains" value="P=2-144"/>
</dbReference>
<dbReference type="PDB" id="3G71">
    <property type="method" value="X-ray"/>
    <property type="resolution" value="2.85 A"/>
    <property type="chains" value="P=2-144"/>
</dbReference>
<dbReference type="PDB" id="3I55">
    <property type="method" value="X-ray"/>
    <property type="resolution" value="3.11 A"/>
    <property type="chains" value="P=1-149"/>
</dbReference>
<dbReference type="PDB" id="3I56">
    <property type="method" value="X-ray"/>
    <property type="resolution" value="2.90 A"/>
    <property type="chains" value="P=1-149"/>
</dbReference>
<dbReference type="PDB" id="3OW2">
    <property type="method" value="X-ray"/>
    <property type="resolution" value="2.70 A"/>
    <property type="chains" value="O=2-144"/>
</dbReference>
<dbReference type="PDB" id="4ADX">
    <property type="method" value="EM"/>
    <property type="resolution" value="6.60 A"/>
    <property type="chains" value="P=1-149"/>
</dbReference>
<dbReference type="PDB" id="4V9F">
    <property type="method" value="X-ray"/>
    <property type="resolution" value="2.40 A"/>
    <property type="chains" value="P=1-149"/>
</dbReference>
<dbReference type="PDBsum" id="1FFK"/>
<dbReference type="PDBsum" id="1JJ2"/>
<dbReference type="PDBsum" id="1K73"/>
<dbReference type="PDBsum" id="1K8A"/>
<dbReference type="PDBsum" id="1K9M"/>
<dbReference type="PDBsum" id="1KC8"/>
<dbReference type="PDBsum" id="1KD1"/>
<dbReference type="PDBsum" id="1KQS"/>
<dbReference type="PDBsum" id="1M1K"/>
<dbReference type="PDBsum" id="1M90"/>
<dbReference type="PDBsum" id="1N8R"/>
<dbReference type="PDBsum" id="1NJI"/>
<dbReference type="PDBsum" id="1Q7Y"/>
<dbReference type="PDBsum" id="1Q81"/>
<dbReference type="PDBsum" id="1Q82"/>
<dbReference type="PDBsum" id="1Q86"/>
<dbReference type="PDBsum" id="1QVF"/>
<dbReference type="PDBsum" id="1QVG"/>
<dbReference type="PDBsum" id="1S72"/>
<dbReference type="PDBsum" id="1VQ4"/>
<dbReference type="PDBsum" id="1VQ5"/>
<dbReference type="PDBsum" id="1VQ6"/>
<dbReference type="PDBsum" id="1VQ7"/>
<dbReference type="PDBsum" id="1VQ8"/>
<dbReference type="PDBsum" id="1VQ9"/>
<dbReference type="PDBsum" id="1VQK"/>
<dbReference type="PDBsum" id="1VQL"/>
<dbReference type="PDBsum" id="1VQM"/>
<dbReference type="PDBsum" id="1VQN"/>
<dbReference type="PDBsum" id="1VQO"/>
<dbReference type="PDBsum" id="1VQP"/>
<dbReference type="PDBsum" id="1W2B"/>
<dbReference type="PDBsum" id="1YHQ"/>
<dbReference type="PDBsum" id="1YI2"/>
<dbReference type="PDBsum" id="1YIJ"/>
<dbReference type="PDBsum" id="1YIT"/>
<dbReference type="PDBsum" id="1YJ9"/>
<dbReference type="PDBsum" id="1YJN"/>
<dbReference type="PDBsum" id="1YJW"/>
<dbReference type="PDBsum" id="2OTJ"/>
<dbReference type="PDBsum" id="2OTL"/>
<dbReference type="PDBsum" id="2QA4"/>
<dbReference type="PDBsum" id="2QEX"/>
<dbReference type="PDBsum" id="3CC2"/>
<dbReference type="PDBsum" id="3CC4"/>
<dbReference type="PDBsum" id="3CC7"/>
<dbReference type="PDBsum" id="3CCE"/>
<dbReference type="PDBsum" id="3CCJ"/>
<dbReference type="PDBsum" id="3CCL"/>
<dbReference type="PDBsum" id="3CCM"/>
<dbReference type="PDBsum" id="3CCQ"/>
<dbReference type="PDBsum" id="3CCR"/>
<dbReference type="PDBsum" id="3CCS"/>
<dbReference type="PDBsum" id="3CCU"/>
<dbReference type="PDBsum" id="3CCV"/>
<dbReference type="PDBsum" id="3CD6"/>
<dbReference type="PDBsum" id="3CMA"/>
<dbReference type="PDBsum" id="3CME"/>
<dbReference type="PDBsum" id="3CPW"/>
<dbReference type="PDBsum" id="3CXC"/>
<dbReference type="PDBsum" id="3G4S"/>
<dbReference type="PDBsum" id="3G6E"/>
<dbReference type="PDBsum" id="3G71"/>
<dbReference type="PDBsum" id="3I55"/>
<dbReference type="PDBsum" id="3I56"/>
<dbReference type="PDBsum" id="3OW2"/>
<dbReference type="PDBsum" id="4ADX"/>
<dbReference type="PDBsum" id="4V9F"/>
<dbReference type="SMR" id="P14119"/>
<dbReference type="IntAct" id="P14119">
    <property type="interactions" value="2"/>
</dbReference>
<dbReference type="STRING" id="272569.rrnAC1594"/>
<dbReference type="PaxDb" id="272569-rrnAC1594"/>
<dbReference type="EnsemblBacteria" id="AAV46512">
    <property type="protein sequence ID" value="AAV46512"/>
    <property type="gene ID" value="rrnAC1594"/>
</dbReference>
<dbReference type="KEGG" id="hma:rrnAC1594"/>
<dbReference type="PATRIC" id="fig|272569.17.peg.2283"/>
<dbReference type="eggNOG" id="arCOG04089">
    <property type="taxonomic scope" value="Archaea"/>
</dbReference>
<dbReference type="HOGENOM" id="CLU_083919_1_1_2"/>
<dbReference type="EvolutionaryTrace" id="P14119"/>
<dbReference type="Proteomes" id="UP000001169">
    <property type="component" value="Chromosome I"/>
</dbReference>
<dbReference type="GO" id="GO:0022625">
    <property type="term" value="C:cytosolic large ribosomal subunit"/>
    <property type="evidence" value="ECO:0007669"/>
    <property type="project" value="InterPro"/>
</dbReference>
<dbReference type="GO" id="GO:0070180">
    <property type="term" value="F:large ribosomal subunit rRNA binding"/>
    <property type="evidence" value="ECO:0007669"/>
    <property type="project" value="UniProtKB-UniRule"/>
</dbReference>
<dbReference type="GO" id="GO:0003735">
    <property type="term" value="F:structural constituent of ribosome"/>
    <property type="evidence" value="ECO:0007669"/>
    <property type="project" value="InterPro"/>
</dbReference>
<dbReference type="GO" id="GO:0006412">
    <property type="term" value="P:translation"/>
    <property type="evidence" value="ECO:0007669"/>
    <property type="project" value="UniProtKB-UniRule"/>
</dbReference>
<dbReference type="CDD" id="cd01418">
    <property type="entry name" value="Ribosomal_L19e_A"/>
    <property type="match status" value="1"/>
</dbReference>
<dbReference type="FunFam" id="1.10.1650.10:FF:000001">
    <property type="entry name" value="Ribosomal protein L19"/>
    <property type="match status" value="1"/>
</dbReference>
<dbReference type="Gene3D" id="1.10.1200.60">
    <property type="match status" value="1"/>
</dbReference>
<dbReference type="Gene3D" id="1.10.1650.10">
    <property type="match status" value="1"/>
</dbReference>
<dbReference type="Gene3D" id="1.20.5.560">
    <property type="entry name" value="Single Heli x bin"/>
    <property type="match status" value="1"/>
</dbReference>
<dbReference type="HAMAP" id="MF_01475">
    <property type="entry name" value="Ribosomal_eL19"/>
    <property type="match status" value="1"/>
</dbReference>
<dbReference type="InterPro" id="IPR035970">
    <property type="entry name" value="60S_ribosomal_eL19_sf"/>
</dbReference>
<dbReference type="InterPro" id="IPR039547">
    <property type="entry name" value="Ribosomal_eL19"/>
</dbReference>
<dbReference type="InterPro" id="IPR033936">
    <property type="entry name" value="Ribosomal_eL19_arc"/>
</dbReference>
<dbReference type="InterPro" id="IPR023638">
    <property type="entry name" value="Ribosomal_eL19_CS"/>
</dbReference>
<dbReference type="InterPro" id="IPR000196">
    <property type="entry name" value="Ribosomal_eL19_dom"/>
</dbReference>
<dbReference type="InterPro" id="IPR015972">
    <property type="entry name" value="Ribosomal_eL19_dom1"/>
</dbReference>
<dbReference type="InterPro" id="IPR015973">
    <property type="entry name" value="Ribosomal_eL19_dom2"/>
</dbReference>
<dbReference type="InterPro" id="IPR015974">
    <property type="entry name" value="Ribosomal_eL19_dom3"/>
</dbReference>
<dbReference type="NCBIfam" id="NF006343">
    <property type="entry name" value="PRK08570.1"/>
    <property type="match status" value="1"/>
</dbReference>
<dbReference type="PANTHER" id="PTHR10722">
    <property type="entry name" value="60S RIBOSOMAL PROTEIN L19"/>
    <property type="match status" value="1"/>
</dbReference>
<dbReference type="Pfam" id="PF01280">
    <property type="entry name" value="Ribosomal_L19e"/>
    <property type="match status" value="1"/>
</dbReference>
<dbReference type="Pfam" id="PF25476">
    <property type="entry name" value="Ribosomal_L19e_C"/>
    <property type="match status" value="1"/>
</dbReference>
<dbReference type="SMART" id="SM01416">
    <property type="entry name" value="Ribosomal_L19e"/>
    <property type="match status" value="1"/>
</dbReference>
<dbReference type="SUPFAM" id="SSF48140">
    <property type="entry name" value="Ribosomal protein L19 (L19e)"/>
    <property type="match status" value="1"/>
</dbReference>
<dbReference type="PROSITE" id="PS00526">
    <property type="entry name" value="RIBOSOMAL_L19E"/>
    <property type="match status" value="1"/>
</dbReference>
<reference key="1">
    <citation type="journal article" date="1991" name="Mol. Gen. Genet.">
        <title>Organization and nucleotide sequence of ten ribosomal protein genes from the region equivalent to the spectinomycin operon in the archaebacterium Halobacterium marismortui.</title>
        <authorList>
            <person name="Scholzen T."/>
            <person name="Arndt E."/>
        </authorList>
    </citation>
    <scope>NUCLEOTIDE SEQUENCE [GENOMIC DNA]</scope>
</reference>
<reference key="2">
    <citation type="journal article" date="2004" name="Genome Res.">
        <title>Genome sequence of Haloarcula marismortui: a halophilic archaeon from the Dead Sea.</title>
        <authorList>
            <person name="Baliga N.S."/>
            <person name="Bonneau R."/>
            <person name="Facciotti M.T."/>
            <person name="Pan M."/>
            <person name="Glusman G."/>
            <person name="Deutsch E.W."/>
            <person name="Shannon P."/>
            <person name="Chiu Y."/>
            <person name="Weng R.S."/>
            <person name="Gan R.R."/>
            <person name="Hung P."/>
            <person name="Date S.V."/>
            <person name="Marcotte E."/>
            <person name="Hood L."/>
            <person name="Ng W.V."/>
        </authorList>
    </citation>
    <scope>NUCLEOTIDE SEQUENCE [LARGE SCALE GENOMIC DNA]</scope>
    <source>
        <strain>ATCC 43049 / DSM 3752 / JCM 8966 / VKM B-1809</strain>
    </source>
</reference>
<reference key="3">
    <citation type="journal article" date="1989" name="Eur. J. Biochem.">
        <title>Primary structures of five ribosomal proteins from the archaebacterium Halobacterium marismortui and their structural relationships to eubacterial and eukaryotic ribosomal proteins.</title>
        <authorList>
            <person name="Hatakeyama T."/>
            <person name="Kaufmann F."/>
            <person name="Schroeter B."/>
            <person name="Hatakeyama T."/>
        </authorList>
    </citation>
    <scope>PROTEIN SEQUENCE OF 2-149</scope>
    <scope>SUBUNIT</scope>
</reference>
<reference key="4">
    <citation type="journal article" date="2000" name="Science">
        <title>The complete atomic structure of the large ribosomal subunit at 2.4 A resolution.</title>
        <authorList>
            <person name="Ban N."/>
            <person name="Nissen P."/>
            <person name="Hansen J."/>
            <person name="Moore P.B."/>
            <person name="Steitz T.A."/>
        </authorList>
    </citation>
    <scope>X-RAY CRYSTALLOGRAPHY (2.4 ANGSTROMS) OF THE 50S SUBUNIT</scope>
    <source>
        <strain>ATCC 43049 / DSM 3752 / JCM 8966 / VKM B-1809</strain>
    </source>
</reference>
<reference key="5">
    <citation type="journal article" date="2000" name="Science">
        <title>The structural basis of ribosome activity in peptide bond synthesis.</title>
        <authorList>
            <person name="Nissen P."/>
            <person name="Hansen J."/>
            <person name="Ban N."/>
            <person name="Moore P.B."/>
            <person name="Steitz T.A."/>
        </authorList>
    </citation>
    <scope>X-RAY CRYSTALLOGRAPHY (3.0 ANGSTROMS) OF THE 50S SUBUNIT</scope>
    <source>
        <strain>ATCC 43049 / DSM 3752 / JCM 8966 / VKM B-1809</strain>
    </source>
</reference>
<reference key="6">
    <citation type="journal article" date="2002" name="Nat. Struct. Biol.">
        <title>A pre-translocational intermediate in protein synthesis observed in crystals of enzymatically active 50S subunits.</title>
        <authorList>
            <person name="Schmeing T.M."/>
            <person name="Seila A.C."/>
            <person name="Hansen J.L."/>
            <person name="Freeborn B."/>
            <person name="Soukup J.K."/>
            <person name="Scaringe S.A."/>
            <person name="Strobel S.A."/>
            <person name="Moore P.B."/>
            <person name="Steitz T.A."/>
        </authorList>
    </citation>
    <scope>X-RAY CRYSTALLOGRAPHY (3.1 ANGSTROMS) OF THE 50S SUBUNIT</scope>
    <source>
        <strain>ATCC 43049 / DSM 3752 / JCM 8966 / VKM B-1809</strain>
    </source>
</reference>
<reference key="7">
    <citation type="journal article" date="2001" name="EMBO J.">
        <title>The kink-turn: a new RNA secondary structure motif.</title>
        <authorList>
            <person name="Klein D.J."/>
            <person name="Schmeing T.M."/>
            <person name="Moore P.B."/>
            <person name="Steitz T.A."/>
        </authorList>
    </citation>
    <scope>X-RAY CRYSTALLOGRAPHY (2.4 ANGSTROMS) OF THE 50S SUBUNIT</scope>
    <source>
        <strain>ATCC 43049 / DSM 3752 / JCM 8966 / VKM B-1809</strain>
    </source>
</reference>
<reference key="8">
    <citation type="journal article" date="2002" name="Mol. Cell">
        <title>The structures of four macrolide antibiotics bound to the large ribosomal subunit.</title>
        <authorList>
            <person name="Hansen J.L."/>
            <person name="Ippolito J.A."/>
            <person name="Ban N."/>
            <person name="Nissen P."/>
            <person name="Moore P.B."/>
            <person name="Steitz T.A."/>
        </authorList>
    </citation>
    <scope>X-RAY CRYSTALLOGRAPHY (3.0 ANGSTROMS) OF THE 50S SUBUNIT IN COMPLEX WITH FOUR MACROLIDE ANTIBIOTICS</scope>
    <source>
        <strain>ATCC 43049 / DSM 3752 / JCM 8966 / VKM B-1809</strain>
    </source>
</reference>
<reference key="9">
    <citation type="journal article" date="2002" name="Proc. Natl. Acad. Sci. U.S.A.">
        <title>Structural insights into peptide bond formation.</title>
        <authorList>
            <person name="Hansen J.L."/>
            <person name="Schmeing T.M."/>
            <person name="Moore P.B."/>
            <person name="Steitz T.A."/>
        </authorList>
    </citation>
    <scope>X-RAY CRYSTALLOGRAPHY (2.8 ANGSTROMS) OF THE 50S SUBUNIT</scope>
    <source>
        <strain>ATCC 43049 / DSM 3752 / JCM 8966 / VKM B-1809</strain>
    </source>
</reference>
<reference key="10">
    <citation type="journal article" date="2003" name="J. Mol. Biol.">
        <title>Structures of five antibiotics bound at the peptidyl transferase center of the large ribosomal subunit.</title>
        <authorList>
            <person name="Hansen J.L."/>
            <person name="Moore P.B."/>
            <person name="Steitz T.A."/>
        </authorList>
    </citation>
    <scope>X-RAY CRYSTALLOGRAPHY (3.0 ANGSTROMS) OF THE 50S SUBUNIT IN COMPLEX WITH FIVE ANTIBIOTICS AT THE PEPTIDYL TRANSFERASE CENTER</scope>
    <source>
        <strain>ATCC 43049 / DSM 3752 / JCM 8966 / VKM B-1809</strain>
    </source>
</reference>
<reference key="11">
    <citation type="journal article" date="2003" name="RNA">
        <title>Structures of deacylated tRNA mimics bound to the E site of the large ribosomal subunit.</title>
        <authorList>
            <person name="Schmeing T.M."/>
            <person name="Moore P.B."/>
            <person name="Steitz T.A."/>
        </authorList>
    </citation>
    <scope>X-RAY CRYSTALLOGRAPHY (2.9 ANGSTROMS) OF THE 50S SUBUNIT WITH TWO DIFFERENT E SITE SUBSTRATES</scope>
</reference>
<reference key="12">
    <citation type="journal article" date="2013" name="Acta Crystallogr. D">
        <title>Revisiting the Haloarcula marismortui 50S ribosomal subunit model.</title>
        <authorList>
            <person name="Gabdulkhakov A."/>
            <person name="Nikonov S."/>
            <person name="Garber M."/>
        </authorList>
    </citation>
    <scope>X-RAY CRYSTALLOGRAPHY (2.4 ANGSTROMS) OF THE 50S SUBUNIT</scope>
</reference>
<gene>
    <name evidence="1" type="primary">rpl19e</name>
    <name type="ordered locus">rrnAC1594</name>
</gene>
<keyword id="KW-0002">3D-structure</keyword>
<keyword id="KW-0903">Direct protein sequencing</keyword>
<keyword id="KW-1185">Reference proteome</keyword>
<keyword id="KW-0687">Ribonucleoprotein</keyword>
<keyword id="KW-0689">Ribosomal protein</keyword>
<keyword id="KW-0694">RNA-binding</keyword>
<keyword id="KW-0699">rRNA-binding</keyword>
<comment type="function">
    <text>Binds to the 23S rRNA. Located at the polypeptide exit tunnel on the outside of the subunit.</text>
</comment>
<comment type="subunit">
    <text evidence="1 3 4 5">Part of the 50S ribosomal subunit.</text>
</comment>
<comment type="similarity">
    <text evidence="1">Belongs to the eukaryotic ribosomal protein eL19 family.</text>
</comment>
<organism>
    <name type="scientific">Haloarcula marismortui (strain ATCC 43049 / DSM 3752 / JCM 8966 / VKM B-1809)</name>
    <name type="common">Halobacterium marismortui</name>
    <dbReference type="NCBI Taxonomy" id="272569"/>
    <lineage>
        <taxon>Archaea</taxon>
        <taxon>Methanobacteriati</taxon>
        <taxon>Methanobacteriota</taxon>
        <taxon>Stenosarchaea group</taxon>
        <taxon>Halobacteria</taxon>
        <taxon>Halobacteriales</taxon>
        <taxon>Haloarculaceae</taxon>
        <taxon>Haloarcula</taxon>
    </lineage>
</organism>
<sequence>MTDLSAQKRLAADVLDVGKNRVWFNPERQGDIADAITREDVRELVDEGAIQAKDKKGNSRGRARERQKKRAYGHQKGAGSRKGKAGARQNSKEDWESRIRAQRTKLRELRDEGTLSSSQYRDLYDKAGGGEFDSVADLERYIDANHGDA</sequence>
<proteinExistence type="evidence at protein level"/>
<protein>
    <recommendedName>
        <fullName evidence="1">Large ribosomal subunit protein eL19</fullName>
    </recommendedName>
    <alternativeName>
        <fullName evidence="6">50S ribosomal protein L19e</fullName>
    </alternativeName>
    <alternativeName>
        <fullName>Hl24</fullName>
    </alternativeName>
    <alternativeName>
        <fullName>Hmal19</fullName>
    </alternativeName>
</protein>
<evidence type="ECO:0000255" key="1">
    <source>
        <dbReference type="HAMAP-Rule" id="MF_01475"/>
    </source>
</evidence>
<evidence type="ECO:0000256" key="2">
    <source>
        <dbReference type="SAM" id="MobiDB-lite"/>
    </source>
</evidence>
<evidence type="ECO:0000269" key="3">
    <source>
    </source>
</evidence>
<evidence type="ECO:0000269" key="4">
    <source>
    </source>
</evidence>
<evidence type="ECO:0000269" key="5">
    <source>
    </source>
</evidence>
<evidence type="ECO:0000305" key="6"/>
<evidence type="ECO:0007829" key="7">
    <source>
        <dbReference type="PDB" id="1VQ7"/>
    </source>
</evidence>
<evidence type="ECO:0007829" key="8">
    <source>
        <dbReference type="PDB" id="1VQ8"/>
    </source>
</evidence>
<accession>P14119</accession>
<accession>Q5V1U0</accession>
<name>RL19E_HALMA</name>